<gene>
    <name evidence="1" type="primary">INA17</name>
    <name evidence="1" type="synonym">AIM43</name>
    <name evidence="1" type="synonym">FMP14</name>
    <name type="ORF">SCRG_02395</name>
</gene>
<evidence type="ECO:0000250" key="1">
    <source>
        <dbReference type="UniProtKB" id="Q02888"/>
    </source>
</evidence>
<evidence type="ECO:0000255" key="2"/>
<evidence type="ECO:0000305" key="3"/>
<sequence>MLKRRSNALITLSRTKLFPITTVAYYHRRLLNQQRRAVSTSPKKEIKSLEDLANLDSLDGVDTELIRDLINEHTTKLNIKKELDMLKKFSQEEESGHEIPVKRFIRPLWMFILMGSSVYLLLHFSWWKLEHEERESQLKKEVEILEHQLNELIVQDKTHNTSRGKGSNESTHMKPWYRRWFW</sequence>
<protein>
    <recommendedName>
        <fullName evidence="1">Inner membrane assembly complex subunit 17</fullName>
    </recommendedName>
    <alternativeName>
        <fullName evidence="1">Altered inheritance of mitochondria protein 43</fullName>
    </alternativeName>
    <alternativeName>
        <fullName evidence="1">Found in mitochondrial proteome protein 14</fullName>
    </alternativeName>
</protein>
<dbReference type="EMBL" id="CH408046">
    <property type="protein sequence ID" value="EDV11121.1"/>
    <property type="molecule type" value="Genomic_DNA"/>
</dbReference>
<dbReference type="SMR" id="B3LKX3"/>
<dbReference type="HOGENOM" id="CLU_127263_0_0_1"/>
<dbReference type="OrthoDB" id="12522at4893"/>
<dbReference type="Proteomes" id="UP000008335">
    <property type="component" value="Unassembled WGS sequence"/>
</dbReference>
<dbReference type="GO" id="GO:0005743">
    <property type="term" value="C:mitochondrial inner membrane"/>
    <property type="evidence" value="ECO:0007669"/>
    <property type="project" value="UniProtKB-SubCell"/>
</dbReference>
<feature type="transit peptide" description="Mitochondrion" evidence="2">
    <location>
        <begin position="1"/>
        <end position="45"/>
    </location>
</feature>
<feature type="chain" id="PRO_0000399882" description="Inner membrane assembly complex subunit 17" evidence="2">
    <location>
        <begin position="46"/>
        <end position="182"/>
    </location>
</feature>
<feature type="topological domain" description="Mitochondrial matrix" evidence="1">
    <location>
        <begin position="46"/>
        <end position="107"/>
    </location>
</feature>
<feature type="transmembrane region" description="Helical" evidence="2">
    <location>
        <begin position="108"/>
        <end position="127"/>
    </location>
</feature>
<feature type="topological domain" description="Mitochondrial intermembrane" evidence="1">
    <location>
        <begin position="128"/>
        <end position="182"/>
    </location>
</feature>
<feature type="coiled-coil region" evidence="2">
    <location>
        <begin position="128"/>
        <end position="158"/>
    </location>
</feature>
<reference key="1">
    <citation type="submission" date="2005-03" db="EMBL/GenBank/DDBJ databases">
        <title>Annotation of the Saccharomyces cerevisiae RM11-1a genome.</title>
        <authorList>
            <consortium name="The Broad Institute Genome Sequencing Platform"/>
            <person name="Birren B.W."/>
            <person name="Lander E.S."/>
            <person name="Galagan J.E."/>
            <person name="Nusbaum C."/>
            <person name="Devon K."/>
            <person name="Cuomo C."/>
            <person name="Jaffe D.B."/>
            <person name="Butler J."/>
            <person name="Alvarez P."/>
            <person name="Gnerre S."/>
            <person name="Grabherr M."/>
            <person name="Kleber M."/>
            <person name="Mauceli E.W."/>
            <person name="Brockman W."/>
            <person name="MacCallum I.A."/>
            <person name="Rounsley S."/>
            <person name="Young S.K."/>
            <person name="LaButti K."/>
            <person name="Pushparaj V."/>
            <person name="DeCaprio D."/>
            <person name="Crawford M."/>
            <person name="Koehrsen M."/>
            <person name="Engels R."/>
            <person name="Montgomery P."/>
            <person name="Pearson M."/>
            <person name="Howarth C."/>
            <person name="Larson L."/>
            <person name="Luoma S."/>
            <person name="White J."/>
            <person name="O'Leary S."/>
            <person name="Kodira C.D."/>
            <person name="Zeng Q."/>
            <person name="Yandava C."/>
            <person name="Alvarado L."/>
            <person name="Pratt S."/>
            <person name="Kruglyak L."/>
        </authorList>
    </citation>
    <scope>NUCLEOTIDE SEQUENCE [LARGE SCALE GENOMIC DNA]</scope>
    <source>
        <strain>RM11-1a</strain>
    </source>
</reference>
<name>INA17_YEAS1</name>
<keyword id="KW-0143">Chaperone</keyword>
<keyword id="KW-0175">Coiled coil</keyword>
<keyword id="KW-0472">Membrane</keyword>
<keyword id="KW-0496">Mitochondrion</keyword>
<keyword id="KW-0999">Mitochondrion inner membrane</keyword>
<keyword id="KW-0809">Transit peptide</keyword>
<keyword id="KW-0812">Transmembrane</keyword>
<keyword id="KW-1133">Transmembrane helix</keyword>
<proteinExistence type="inferred from homology"/>
<organism>
    <name type="scientific">Saccharomyces cerevisiae (strain RM11-1a)</name>
    <name type="common">Baker's yeast</name>
    <dbReference type="NCBI Taxonomy" id="285006"/>
    <lineage>
        <taxon>Eukaryota</taxon>
        <taxon>Fungi</taxon>
        <taxon>Dikarya</taxon>
        <taxon>Ascomycota</taxon>
        <taxon>Saccharomycotina</taxon>
        <taxon>Saccharomycetes</taxon>
        <taxon>Saccharomycetales</taxon>
        <taxon>Saccharomycetaceae</taxon>
        <taxon>Saccharomyces</taxon>
    </lineage>
</organism>
<accession>B3LKX3</accession>
<comment type="function">
    <text evidence="1">Component of the INA complex (INAC) that promotes the biogenesis of mitochondrial F(1)F(0)-ATP synthase. INAC facilitates the assembly of the peripheral stalk and promotes the assembly of the catalytic F(1)-domain with the membrane-embedded F(0)-domain.</text>
</comment>
<comment type="subunit">
    <text evidence="1">Component of the inner membrane assembly (INA) complex, composed of INA17 and INA22. Interacts with a subset of F(1)F(0)-ATP synthase subunits of the F(1)-domain and the peripheral stalk.</text>
</comment>
<comment type="subcellular location">
    <subcellularLocation>
        <location evidence="1">Mitochondrion inner membrane</location>
        <topology evidence="2">Single-pass membrane protein</topology>
    </subcellularLocation>
</comment>
<comment type="similarity">
    <text evidence="3">Belongs to the INA17 family.</text>
</comment>